<name>PETL_AGRST</name>
<organism>
    <name type="scientific">Agrostis stolonifera</name>
    <name type="common">Creeping bentgrass</name>
    <dbReference type="NCBI Taxonomy" id="63632"/>
    <lineage>
        <taxon>Eukaryota</taxon>
        <taxon>Viridiplantae</taxon>
        <taxon>Streptophyta</taxon>
        <taxon>Embryophyta</taxon>
        <taxon>Tracheophyta</taxon>
        <taxon>Spermatophyta</taxon>
        <taxon>Magnoliopsida</taxon>
        <taxon>Liliopsida</taxon>
        <taxon>Poales</taxon>
        <taxon>Poaceae</taxon>
        <taxon>BOP clade</taxon>
        <taxon>Pooideae</taxon>
        <taxon>Poodae</taxon>
        <taxon>Poeae</taxon>
        <taxon>Poeae Chloroplast Group 1 (Aveneae type)</taxon>
        <taxon>Agrostidodinae</taxon>
        <taxon>Agrostidinae</taxon>
        <taxon>Agrostis</taxon>
    </lineage>
</organism>
<dbReference type="EMBL" id="EF115543">
    <property type="protein sequence ID" value="ABK79598.1"/>
    <property type="molecule type" value="Genomic_DNA"/>
</dbReference>
<dbReference type="RefSeq" id="YP_874754.1">
    <property type="nucleotide sequence ID" value="NC_008591.1"/>
</dbReference>
<dbReference type="SMR" id="A1EA26"/>
<dbReference type="GeneID" id="4524996"/>
<dbReference type="GO" id="GO:0009535">
    <property type="term" value="C:chloroplast thylakoid membrane"/>
    <property type="evidence" value="ECO:0007669"/>
    <property type="project" value="UniProtKB-SubCell"/>
</dbReference>
<dbReference type="GO" id="GO:0009512">
    <property type="term" value="C:cytochrome b6f complex"/>
    <property type="evidence" value="ECO:0007669"/>
    <property type="project" value="InterPro"/>
</dbReference>
<dbReference type="GO" id="GO:0045158">
    <property type="term" value="F:electron transporter, transferring electrons within cytochrome b6/f complex of photosystem II activity"/>
    <property type="evidence" value="ECO:0007669"/>
    <property type="project" value="UniProtKB-UniRule"/>
</dbReference>
<dbReference type="GO" id="GO:0015979">
    <property type="term" value="P:photosynthesis"/>
    <property type="evidence" value="ECO:0007669"/>
    <property type="project" value="UniProtKB-KW"/>
</dbReference>
<dbReference type="HAMAP" id="MF_00433">
    <property type="entry name" value="Cytb6_f_PetL"/>
    <property type="match status" value="1"/>
</dbReference>
<dbReference type="InterPro" id="IPR007802">
    <property type="entry name" value="Cyt_b6/f_cplx_su6"/>
</dbReference>
<dbReference type="PANTHER" id="PTHR37266">
    <property type="entry name" value="CYTOCHROME B6-F COMPLEX SUBUNIT 6"/>
    <property type="match status" value="1"/>
</dbReference>
<dbReference type="PANTHER" id="PTHR37266:SF1">
    <property type="entry name" value="CYTOCHROME B6-F COMPLEX SUBUNIT 6"/>
    <property type="match status" value="1"/>
</dbReference>
<dbReference type="Pfam" id="PF05115">
    <property type="entry name" value="PetL"/>
    <property type="match status" value="1"/>
</dbReference>
<dbReference type="SUPFAM" id="SSF103436">
    <property type="entry name" value="PetL subunit of the cytochrome b6f complex"/>
    <property type="match status" value="1"/>
</dbReference>
<sequence>MLTLTSYFGFLLAALTITPALFIGLNKIRLI</sequence>
<gene>
    <name evidence="1" type="primary">petL</name>
</gene>
<feature type="chain" id="PRO_0000275519" description="Cytochrome b6-f complex subunit 6">
    <location>
        <begin position="1"/>
        <end position="31"/>
    </location>
</feature>
<feature type="transmembrane region" description="Helical" evidence="1">
    <location>
        <begin position="4"/>
        <end position="24"/>
    </location>
</feature>
<evidence type="ECO:0000255" key="1">
    <source>
        <dbReference type="HAMAP-Rule" id="MF_00433"/>
    </source>
</evidence>
<protein>
    <recommendedName>
        <fullName evidence="1">Cytochrome b6-f complex subunit 6</fullName>
    </recommendedName>
    <alternativeName>
        <fullName evidence="1">Cytochrome b6-f complex subunit PetL</fullName>
    </alternativeName>
    <alternativeName>
        <fullName evidence="1">Cytochrome b6-f complex subunit VI</fullName>
    </alternativeName>
</protein>
<accession>A1EA26</accession>
<reference key="1">
    <citation type="journal article" date="2007" name="Theor. Appl. Genet.">
        <title>Complete chloroplast genome sequences of Hordeum vulgare, Sorghum bicolor and Agrostis stolonifera, and comparative analyses with other grass genomes.</title>
        <authorList>
            <person name="Saski C."/>
            <person name="Lee S.-B."/>
            <person name="Fjellheim S."/>
            <person name="Guda C."/>
            <person name="Jansen R.K."/>
            <person name="Luo H."/>
            <person name="Tomkins J."/>
            <person name="Rognli O.A."/>
            <person name="Daniell H."/>
            <person name="Clarke J.L."/>
        </authorList>
    </citation>
    <scope>NUCLEOTIDE SEQUENCE [LARGE SCALE GENOMIC DNA]</scope>
    <source>
        <strain>cv. Penn A-4</strain>
    </source>
</reference>
<comment type="function">
    <text evidence="1">Component of the cytochrome b6-f complex, which mediates electron transfer between photosystem II (PSII) and photosystem I (PSI), cyclic electron flow around PSI, and state transitions. PetL is important for photoautotrophic growth as well as for electron transfer efficiency and stability of the cytochrome b6-f complex.</text>
</comment>
<comment type="subunit">
    <text evidence="1">The 4 large subunits of the cytochrome b6-f complex are cytochrome b6, subunit IV (17 kDa polypeptide, PetD), cytochrome f and the Rieske protein, while the 4 small subunits are PetG, PetL, PetM and PetN. The complex functions as a dimer.</text>
</comment>
<comment type="subcellular location">
    <subcellularLocation>
        <location evidence="1">Plastid</location>
        <location evidence="1">Chloroplast thylakoid membrane</location>
        <topology evidence="1">Single-pass membrane protein</topology>
    </subcellularLocation>
</comment>
<comment type="similarity">
    <text evidence="1">Belongs to the PetL family.</text>
</comment>
<keyword id="KW-0150">Chloroplast</keyword>
<keyword id="KW-0249">Electron transport</keyword>
<keyword id="KW-0472">Membrane</keyword>
<keyword id="KW-0602">Photosynthesis</keyword>
<keyword id="KW-0934">Plastid</keyword>
<keyword id="KW-0793">Thylakoid</keyword>
<keyword id="KW-0812">Transmembrane</keyword>
<keyword id="KW-1133">Transmembrane helix</keyword>
<keyword id="KW-0813">Transport</keyword>
<proteinExistence type="inferred from homology"/>
<geneLocation type="chloroplast"/>